<proteinExistence type="inferred from homology"/>
<accession>Q89VE9</accession>
<sequence>MIVMTNSAAPHLLPVFARSDLGFERGEGCWLIATNGDRYLDFTSGVAVNALGHAHPALVKALQEQATKLWHMSNLFQSPDGEKLATRLCNESFADFVFFCNSGAEALEGVIKLVRHHHFSKGHPERYRIITFEGAFHGRTLATLAATGSAKYLEGFGPPMDGFDQVPHGDIEAVKKAIGPQTAGILIEPIQGEGGVRSATPAFLKALRQLCDEKGLLLAFDEVQTGMGRTGDLFAHRRTGVTPDVMSLAKALGGGFPIGAILATADAAAGMGPGSHGSTFGGNPLAIAAANAVLDVMLKPGFFDHVQKMSLLLKQKLASVIDRHGDVVSEVRGEGLLIGIKAVVPSGDLVAALRNEKLLTVGAGDNVVRFLPPLIVTEAEIEDSVGRLERACAAISSSQTKRAAS</sequence>
<feature type="chain" id="PRO_0000112729" description="Acetylornithine aminotransferase 1">
    <location>
        <begin position="1"/>
        <end position="405"/>
    </location>
</feature>
<feature type="binding site" evidence="1">
    <location>
        <begin position="103"/>
        <end position="104"/>
    </location>
    <ligand>
        <name>pyridoxal 5'-phosphate</name>
        <dbReference type="ChEBI" id="CHEBI:597326"/>
    </ligand>
</feature>
<feature type="binding site" evidence="1">
    <location>
        <position position="136"/>
    </location>
    <ligand>
        <name>pyridoxal 5'-phosphate</name>
        <dbReference type="ChEBI" id="CHEBI:597326"/>
    </ligand>
</feature>
<feature type="binding site" evidence="1">
    <location>
        <position position="139"/>
    </location>
    <ligand>
        <name>N(2)-acetyl-L-ornithine</name>
        <dbReference type="ChEBI" id="CHEBI:57805"/>
    </ligand>
</feature>
<feature type="binding site" evidence="1">
    <location>
        <begin position="221"/>
        <end position="224"/>
    </location>
    <ligand>
        <name>pyridoxal 5'-phosphate</name>
        <dbReference type="ChEBI" id="CHEBI:597326"/>
    </ligand>
</feature>
<feature type="binding site" evidence="1">
    <location>
        <position position="278"/>
    </location>
    <ligand>
        <name>N(2)-acetyl-L-ornithine</name>
        <dbReference type="ChEBI" id="CHEBI:57805"/>
    </ligand>
</feature>
<feature type="binding site" evidence="1">
    <location>
        <position position="279"/>
    </location>
    <ligand>
        <name>pyridoxal 5'-phosphate</name>
        <dbReference type="ChEBI" id="CHEBI:597326"/>
    </ligand>
</feature>
<feature type="modified residue" description="N6-(pyridoxal phosphate)lysine" evidence="1">
    <location>
        <position position="250"/>
    </location>
</feature>
<comment type="catalytic activity">
    <reaction evidence="1">
        <text>N(2)-acetyl-L-ornithine + 2-oxoglutarate = N-acetyl-L-glutamate 5-semialdehyde + L-glutamate</text>
        <dbReference type="Rhea" id="RHEA:18049"/>
        <dbReference type="ChEBI" id="CHEBI:16810"/>
        <dbReference type="ChEBI" id="CHEBI:29123"/>
        <dbReference type="ChEBI" id="CHEBI:29985"/>
        <dbReference type="ChEBI" id="CHEBI:57805"/>
        <dbReference type="EC" id="2.6.1.11"/>
    </reaction>
</comment>
<comment type="cofactor">
    <cofactor evidence="1">
        <name>pyridoxal 5'-phosphate</name>
        <dbReference type="ChEBI" id="CHEBI:597326"/>
    </cofactor>
    <text evidence="1">Binds 1 pyridoxal phosphate per subunit.</text>
</comment>
<comment type="pathway">
    <text evidence="1">Amino-acid biosynthesis; L-arginine biosynthesis; N(2)-acetyl-L-ornithine from L-glutamate: step 4/4.</text>
</comment>
<comment type="subunit">
    <text evidence="1">Homodimer.</text>
</comment>
<comment type="subcellular location">
    <subcellularLocation>
        <location evidence="1">Cytoplasm</location>
    </subcellularLocation>
</comment>
<comment type="miscellaneous">
    <text evidence="1">May also have succinyldiaminopimelate aminotransferase activity, thus carrying out the corresponding step in lysine biosynthesis.</text>
</comment>
<comment type="similarity">
    <text evidence="1">Belongs to the class-III pyridoxal-phosphate-dependent aminotransferase family. ArgD subfamily.</text>
</comment>
<keyword id="KW-0028">Amino-acid biosynthesis</keyword>
<keyword id="KW-0032">Aminotransferase</keyword>
<keyword id="KW-0055">Arginine biosynthesis</keyword>
<keyword id="KW-0963">Cytoplasm</keyword>
<keyword id="KW-0663">Pyridoxal phosphate</keyword>
<keyword id="KW-1185">Reference proteome</keyword>
<keyword id="KW-0808">Transferase</keyword>
<protein>
    <recommendedName>
        <fullName evidence="1">Acetylornithine aminotransferase 1</fullName>
        <shortName evidence="1">ACOAT 1</shortName>
        <ecNumber evidence="1">2.6.1.11</ecNumber>
    </recommendedName>
</protein>
<name>ARGD1_BRADU</name>
<dbReference type="EC" id="2.6.1.11" evidence="1"/>
<dbReference type="EMBL" id="BA000040">
    <property type="protein sequence ID" value="BAC46363.1"/>
    <property type="molecule type" value="Genomic_DNA"/>
</dbReference>
<dbReference type="RefSeq" id="NP_767738.1">
    <property type="nucleotide sequence ID" value="NC_004463.1"/>
</dbReference>
<dbReference type="SMR" id="Q89VE9"/>
<dbReference type="FunCoup" id="Q89VE9">
    <property type="interactions" value="686"/>
</dbReference>
<dbReference type="STRING" id="224911.AAV28_02350"/>
<dbReference type="EnsemblBacteria" id="BAC46363">
    <property type="protein sequence ID" value="BAC46363"/>
    <property type="gene ID" value="BAC46363"/>
</dbReference>
<dbReference type="KEGG" id="bja:blr1098"/>
<dbReference type="PATRIC" id="fig|224911.5.peg.1134"/>
<dbReference type="eggNOG" id="COG4992">
    <property type="taxonomic scope" value="Bacteria"/>
</dbReference>
<dbReference type="HOGENOM" id="CLU_016922_10_1_5"/>
<dbReference type="InParanoid" id="Q89VE9"/>
<dbReference type="OrthoDB" id="9801834at2"/>
<dbReference type="PhylomeDB" id="Q89VE9"/>
<dbReference type="UniPathway" id="UPA00068">
    <property type="reaction ID" value="UER00109"/>
</dbReference>
<dbReference type="Proteomes" id="UP000002526">
    <property type="component" value="Chromosome"/>
</dbReference>
<dbReference type="GO" id="GO:0005737">
    <property type="term" value="C:cytoplasm"/>
    <property type="evidence" value="ECO:0007669"/>
    <property type="project" value="UniProtKB-SubCell"/>
</dbReference>
<dbReference type="GO" id="GO:0042802">
    <property type="term" value="F:identical protein binding"/>
    <property type="evidence" value="ECO:0000318"/>
    <property type="project" value="GO_Central"/>
</dbReference>
<dbReference type="GO" id="GO:0003992">
    <property type="term" value="F:N2-acetyl-L-ornithine:2-oxoglutarate 5-aminotransferase activity"/>
    <property type="evidence" value="ECO:0007669"/>
    <property type="project" value="UniProtKB-UniRule"/>
</dbReference>
<dbReference type="GO" id="GO:0030170">
    <property type="term" value="F:pyridoxal phosphate binding"/>
    <property type="evidence" value="ECO:0000318"/>
    <property type="project" value="GO_Central"/>
</dbReference>
<dbReference type="GO" id="GO:0006526">
    <property type="term" value="P:L-arginine biosynthetic process"/>
    <property type="evidence" value="ECO:0007669"/>
    <property type="project" value="UniProtKB-UniRule"/>
</dbReference>
<dbReference type="CDD" id="cd00610">
    <property type="entry name" value="OAT_like"/>
    <property type="match status" value="1"/>
</dbReference>
<dbReference type="FunFam" id="3.40.640.10:FF:000004">
    <property type="entry name" value="Acetylornithine aminotransferase"/>
    <property type="match status" value="1"/>
</dbReference>
<dbReference type="Gene3D" id="3.90.1150.10">
    <property type="entry name" value="Aspartate Aminotransferase, domain 1"/>
    <property type="match status" value="1"/>
</dbReference>
<dbReference type="Gene3D" id="3.40.640.10">
    <property type="entry name" value="Type I PLP-dependent aspartate aminotransferase-like (Major domain)"/>
    <property type="match status" value="1"/>
</dbReference>
<dbReference type="HAMAP" id="MF_01107">
    <property type="entry name" value="ArgD_aminotrans_3"/>
    <property type="match status" value="1"/>
</dbReference>
<dbReference type="InterPro" id="IPR004636">
    <property type="entry name" value="AcOrn/SuccOrn_fam"/>
</dbReference>
<dbReference type="InterPro" id="IPR005814">
    <property type="entry name" value="Aminotrans_3"/>
</dbReference>
<dbReference type="InterPro" id="IPR049704">
    <property type="entry name" value="Aminotrans_3_PPA_site"/>
</dbReference>
<dbReference type="InterPro" id="IPR050103">
    <property type="entry name" value="Class-III_PLP-dep_AT"/>
</dbReference>
<dbReference type="InterPro" id="IPR015424">
    <property type="entry name" value="PyrdxlP-dep_Trfase"/>
</dbReference>
<dbReference type="InterPro" id="IPR015421">
    <property type="entry name" value="PyrdxlP-dep_Trfase_major"/>
</dbReference>
<dbReference type="InterPro" id="IPR015422">
    <property type="entry name" value="PyrdxlP-dep_Trfase_small"/>
</dbReference>
<dbReference type="NCBIfam" id="TIGR00707">
    <property type="entry name" value="argD"/>
    <property type="match status" value="1"/>
</dbReference>
<dbReference type="NCBIfam" id="NF002325">
    <property type="entry name" value="PRK01278.1"/>
    <property type="match status" value="1"/>
</dbReference>
<dbReference type="PANTHER" id="PTHR11986">
    <property type="entry name" value="AMINOTRANSFERASE CLASS III"/>
    <property type="match status" value="1"/>
</dbReference>
<dbReference type="PANTHER" id="PTHR11986:SF113">
    <property type="entry name" value="SUCCINYLORNITHINE TRANSAMINASE"/>
    <property type="match status" value="1"/>
</dbReference>
<dbReference type="Pfam" id="PF00202">
    <property type="entry name" value="Aminotran_3"/>
    <property type="match status" value="1"/>
</dbReference>
<dbReference type="PIRSF" id="PIRSF000521">
    <property type="entry name" value="Transaminase_4ab_Lys_Orn"/>
    <property type="match status" value="1"/>
</dbReference>
<dbReference type="SUPFAM" id="SSF53383">
    <property type="entry name" value="PLP-dependent transferases"/>
    <property type="match status" value="1"/>
</dbReference>
<dbReference type="PROSITE" id="PS00600">
    <property type="entry name" value="AA_TRANSFER_CLASS_3"/>
    <property type="match status" value="1"/>
</dbReference>
<reference key="1">
    <citation type="journal article" date="2002" name="DNA Res.">
        <title>Complete genomic sequence of nitrogen-fixing symbiotic bacterium Bradyrhizobium japonicum USDA110.</title>
        <authorList>
            <person name="Kaneko T."/>
            <person name="Nakamura Y."/>
            <person name="Sato S."/>
            <person name="Minamisawa K."/>
            <person name="Uchiumi T."/>
            <person name="Sasamoto S."/>
            <person name="Watanabe A."/>
            <person name="Idesawa K."/>
            <person name="Iriguchi M."/>
            <person name="Kawashima K."/>
            <person name="Kohara M."/>
            <person name="Matsumoto M."/>
            <person name="Shimpo S."/>
            <person name="Tsuruoka H."/>
            <person name="Wada T."/>
            <person name="Yamada M."/>
            <person name="Tabata S."/>
        </authorList>
    </citation>
    <scope>NUCLEOTIDE SEQUENCE [LARGE SCALE GENOMIC DNA]</scope>
    <source>
        <strain>JCM 10833 / BCRC 13528 / IAM 13628 / NBRC 14792 / USDA 110</strain>
    </source>
</reference>
<organism>
    <name type="scientific">Bradyrhizobium diazoefficiens (strain JCM 10833 / BCRC 13528 / IAM 13628 / NBRC 14792 / USDA 110)</name>
    <dbReference type="NCBI Taxonomy" id="224911"/>
    <lineage>
        <taxon>Bacteria</taxon>
        <taxon>Pseudomonadati</taxon>
        <taxon>Pseudomonadota</taxon>
        <taxon>Alphaproteobacteria</taxon>
        <taxon>Hyphomicrobiales</taxon>
        <taxon>Nitrobacteraceae</taxon>
        <taxon>Bradyrhizobium</taxon>
    </lineage>
</organism>
<evidence type="ECO:0000255" key="1">
    <source>
        <dbReference type="HAMAP-Rule" id="MF_01107"/>
    </source>
</evidence>
<gene>
    <name evidence="1" type="primary">argD1</name>
    <name type="ordered locus">blr1098</name>
</gene>